<name>ATPB_BACC3</name>
<keyword id="KW-0066">ATP synthesis</keyword>
<keyword id="KW-0067">ATP-binding</keyword>
<keyword id="KW-1003">Cell membrane</keyword>
<keyword id="KW-0139">CF(1)</keyword>
<keyword id="KW-0375">Hydrogen ion transport</keyword>
<keyword id="KW-0406">Ion transport</keyword>
<keyword id="KW-0472">Membrane</keyword>
<keyword id="KW-0547">Nucleotide-binding</keyword>
<keyword id="KW-1278">Translocase</keyword>
<keyword id="KW-0813">Transport</keyword>
<dbReference type="EC" id="7.1.2.2" evidence="1"/>
<dbReference type="EMBL" id="CP001407">
    <property type="protein sequence ID" value="ACO28919.1"/>
    <property type="molecule type" value="Genomic_DNA"/>
</dbReference>
<dbReference type="RefSeq" id="WP_001032600.1">
    <property type="nucleotide sequence ID" value="NZ_CP009318.1"/>
</dbReference>
<dbReference type="SMR" id="C1F0M8"/>
<dbReference type="GeneID" id="45025135"/>
<dbReference type="KEGG" id="bcx:BCA_5450"/>
<dbReference type="PATRIC" id="fig|572264.18.peg.5372"/>
<dbReference type="Proteomes" id="UP000002210">
    <property type="component" value="Chromosome"/>
</dbReference>
<dbReference type="GO" id="GO:0005886">
    <property type="term" value="C:plasma membrane"/>
    <property type="evidence" value="ECO:0007669"/>
    <property type="project" value="UniProtKB-SubCell"/>
</dbReference>
<dbReference type="GO" id="GO:0045259">
    <property type="term" value="C:proton-transporting ATP synthase complex"/>
    <property type="evidence" value="ECO:0007669"/>
    <property type="project" value="UniProtKB-KW"/>
</dbReference>
<dbReference type="GO" id="GO:0005524">
    <property type="term" value="F:ATP binding"/>
    <property type="evidence" value="ECO:0007669"/>
    <property type="project" value="UniProtKB-UniRule"/>
</dbReference>
<dbReference type="GO" id="GO:0016887">
    <property type="term" value="F:ATP hydrolysis activity"/>
    <property type="evidence" value="ECO:0007669"/>
    <property type="project" value="InterPro"/>
</dbReference>
<dbReference type="GO" id="GO:0046933">
    <property type="term" value="F:proton-transporting ATP synthase activity, rotational mechanism"/>
    <property type="evidence" value="ECO:0007669"/>
    <property type="project" value="UniProtKB-UniRule"/>
</dbReference>
<dbReference type="CDD" id="cd18110">
    <property type="entry name" value="ATP-synt_F1_beta_C"/>
    <property type="match status" value="1"/>
</dbReference>
<dbReference type="CDD" id="cd18115">
    <property type="entry name" value="ATP-synt_F1_beta_N"/>
    <property type="match status" value="1"/>
</dbReference>
<dbReference type="CDD" id="cd01133">
    <property type="entry name" value="F1-ATPase_beta_CD"/>
    <property type="match status" value="1"/>
</dbReference>
<dbReference type="FunFam" id="1.10.1140.10:FF:000001">
    <property type="entry name" value="ATP synthase subunit beta"/>
    <property type="match status" value="1"/>
</dbReference>
<dbReference type="FunFam" id="2.40.10.170:FF:000005">
    <property type="entry name" value="ATP synthase subunit beta"/>
    <property type="match status" value="1"/>
</dbReference>
<dbReference type="FunFam" id="3.40.50.300:FF:000004">
    <property type="entry name" value="ATP synthase subunit beta"/>
    <property type="match status" value="1"/>
</dbReference>
<dbReference type="Gene3D" id="2.40.10.170">
    <property type="match status" value="1"/>
</dbReference>
<dbReference type="Gene3D" id="1.10.1140.10">
    <property type="entry name" value="Bovine Mitochondrial F1-atpase, Atp Synthase Beta Chain, Chain D, domain 3"/>
    <property type="match status" value="1"/>
</dbReference>
<dbReference type="Gene3D" id="3.40.50.300">
    <property type="entry name" value="P-loop containing nucleotide triphosphate hydrolases"/>
    <property type="match status" value="1"/>
</dbReference>
<dbReference type="HAMAP" id="MF_01347">
    <property type="entry name" value="ATP_synth_beta_bact"/>
    <property type="match status" value="1"/>
</dbReference>
<dbReference type="InterPro" id="IPR003593">
    <property type="entry name" value="AAA+_ATPase"/>
</dbReference>
<dbReference type="InterPro" id="IPR055190">
    <property type="entry name" value="ATP-synt_VA_C"/>
</dbReference>
<dbReference type="InterPro" id="IPR005722">
    <property type="entry name" value="ATP_synth_F1_bsu"/>
</dbReference>
<dbReference type="InterPro" id="IPR020003">
    <property type="entry name" value="ATPase_a/bsu_AS"/>
</dbReference>
<dbReference type="InterPro" id="IPR050053">
    <property type="entry name" value="ATPase_alpha/beta_chains"/>
</dbReference>
<dbReference type="InterPro" id="IPR004100">
    <property type="entry name" value="ATPase_F1/V1/A1_a/bsu_N"/>
</dbReference>
<dbReference type="InterPro" id="IPR036121">
    <property type="entry name" value="ATPase_F1/V1/A1_a/bsu_N_sf"/>
</dbReference>
<dbReference type="InterPro" id="IPR000194">
    <property type="entry name" value="ATPase_F1/V1/A1_a/bsu_nucl-bd"/>
</dbReference>
<dbReference type="InterPro" id="IPR024034">
    <property type="entry name" value="ATPase_F1/V1_b/a_C"/>
</dbReference>
<dbReference type="InterPro" id="IPR027417">
    <property type="entry name" value="P-loop_NTPase"/>
</dbReference>
<dbReference type="NCBIfam" id="TIGR01039">
    <property type="entry name" value="atpD"/>
    <property type="match status" value="1"/>
</dbReference>
<dbReference type="PANTHER" id="PTHR15184">
    <property type="entry name" value="ATP SYNTHASE"/>
    <property type="match status" value="1"/>
</dbReference>
<dbReference type="PANTHER" id="PTHR15184:SF71">
    <property type="entry name" value="ATP SYNTHASE SUBUNIT BETA, MITOCHONDRIAL"/>
    <property type="match status" value="1"/>
</dbReference>
<dbReference type="Pfam" id="PF00006">
    <property type="entry name" value="ATP-synt_ab"/>
    <property type="match status" value="1"/>
</dbReference>
<dbReference type="Pfam" id="PF02874">
    <property type="entry name" value="ATP-synt_ab_N"/>
    <property type="match status" value="1"/>
</dbReference>
<dbReference type="Pfam" id="PF22919">
    <property type="entry name" value="ATP-synt_VA_C"/>
    <property type="match status" value="1"/>
</dbReference>
<dbReference type="SMART" id="SM00382">
    <property type="entry name" value="AAA"/>
    <property type="match status" value="1"/>
</dbReference>
<dbReference type="SUPFAM" id="SSF47917">
    <property type="entry name" value="C-terminal domain of alpha and beta subunits of F1 ATP synthase"/>
    <property type="match status" value="1"/>
</dbReference>
<dbReference type="SUPFAM" id="SSF50615">
    <property type="entry name" value="N-terminal domain of alpha and beta subunits of F1 ATP synthase"/>
    <property type="match status" value="1"/>
</dbReference>
<dbReference type="SUPFAM" id="SSF52540">
    <property type="entry name" value="P-loop containing nucleoside triphosphate hydrolases"/>
    <property type="match status" value="1"/>
</dbReference>
<dbReference type="PROSITE" id="PS00152">
    <property type="entry name" value="ATPASE_ALPHA_BETA"/>
    <property type="match status" value="1"/>
</dbReference>
<sequence length="469" mass="51194">MNKGRVTQIMGPVVDVKFDGGKLPEIYNALTVKQSNENGTSINLTFEVALHLGDDTVRTVAMSSTDGLVRGTEVEDTGKAISVPVGDATLGRVFNVLGDAIDLDGEVPADVRRDPIHRQAPAFEELSTKVEILETGIKVVDLLAPYIKGGKIGLFGGAGVGKTVLIQELINNIAQEHGGISVFAGVGERTREGNDLYHEMSDSGVIKKTAMVFGQMNEPPGARQRVALTGLTMAEHFRDEQGQDVLLFIDNIFRFTQAGSEVSALLGRMPSAVGYQPTLATEMGQLQERITSTNKGSITSIQAVYVPADDYTDPAPATTFAHLDATTNLERRLTQMGIYPAVDPLASTSRALSPEIVGEEHYEVARQVQQTLQRYKELQDIIAILGMDELSEEDKLVVHRARRIQFFLSQNFHVAEQFTGQKGSYVPVKETVRGFKEILEGKYDDLPEDAFRLVGGIEEVIENAKKMMA</sequence>
<accession>C1F0M8</accession>
<evidence type="ECO:0000255" key="1">
    <source>
        <dbReference type="HAMAP-Rule" id="MF_01347"/>
    </source>
</evidence>
<comment type="function">
    <text evidence="1">Produces ATP from ADP in the presence of a proton gradient across the membrane. The catalytic sites are hosted primarily by the beta subunits.</text>
</comment>
<comment type="catalytic activity">
    <reaction evidence="1">
        <text>ATP + H2O + 4 H(+)(in) = ADP + phosphate + 5 H(+)(out)</text>
        <dbReference type="Rhea" id="RHEA:57720"/>
        <dbReference type="ChEBI" id="CHEBI:15377"/>
        <dbReference type="ChEBI" id="CHEBI:15378"/>
        <dbReference type="ChEBI" id="CHEBI:30616"/>
        <dbReference type="ChEBI" id="CHEBI:43474"/>
        <dbReference type="ChEBI" id="CHEBI:456216"/>
        <dbReference type="EC" id="7.1.2.2"/>
    </reaction>
</comment>
<comment type="subunit">
    <text evidence="1">F-type ATPases have 2 components, CF(1) - the catalytic core - and CF(0) - the membrane proton channel. CF(1) has five subunits: alpha(3), beta(3), gamma(1), delta(1), epsilon(1). CF(0) has three main subunits: a(1), b(2) and c(9-12). The alpha and beta chains form an alternating ring which encloses part of the gamma chain. CF(1) is attached to CF(0) by a central stalk formed by the gamma and epsilon chains, while a peripheral stalk is formed by the delta and b chains.</text>
</comment>
<comment type="subcellular location">
    <subcellularLocation>
        <location evidence="1">Cell membrane</location>
        <topology evidence="1">Peripheral membrane protein</topology>
    </subcellularLocation>
</comment>
<comment type="similarity">
    <text evidence="1">Belongs to the ATPase alpha/beta chains family.</text>
</comment>
<feature type="chain" id="PRO_1000166570" description="ATP synthase subunit beta">
    <location>
        <begin position="1"/>
        <end position="469"/>
    </location>
</feature>
<feature type="binding site" evidence="1">
    <location>
        <begin position="156"/>
        <end position="163"/>
    </location>
    <ligand>
        <name>ATP</name>
        <dbReference type="ChEBI" id="CHEBI:30616"/>
    </ligand>
</feature>
<gene>
    <name evidence="1" type="primary">atpD</name>
    <name type="ordered locus">BCA_5450</name>
</gene>
<reference key="1">
    <citation type="submission" date="2009-02" db="EMBL/GenBank/DDBJ databases">
        <title>Genome sequence of Bacillus cereus 03BB102.</title>
        <authorList>
            <person name="Dodson R.J."/>
            <person name="Jackson P."/>
            <person name="Munk A.C."/>
            <person name="Brettin T."/>
            <person name="Bruce D."/>
            <person name="Detter C."/>
            <person name="Tapia R."/>
            <person name="Han C."/>
            <person name="Sutton G."/>
            <person name="Sims D."/>
        </authorList>
    </citation>
    <scope>NUCLEOTIDE SEQUENCE [LARGE SCALE GENOMIC DNA]</scope>
    <source>
        <strain>03BB102</strain>
    </source>
</reference>
<proteinExistence type="inferred from homology"/>
<organism>
    <name type="scientific">Bacillus cereus (strain 03BB102)</name>
    <dbReference type="NCBI Taxonomy" id="572264"/>
    <lineage>
        <taxon>Bacteria</taxon>
        <taxon>Bacillati</taxon>
        <taxon>Bacillota</taxon>
        <taxon>Bacilli</taxon>
        <taxon>Bacillales</taxon>
        <taxon>Bacillaceae</taxon>
        <taxon>Bacillus</taxon>
        <taxon>Bacillus cereus group</taxon>
    </lineage>
</organism>
<protein>
    <recommendedName>
        <fullName evidence="1">ATP synthase subunit beta</fullName>
        <ecNumber evidence="1">7.1.2.2</ecNumber>
    </recommendedName>
    <alternativeName>
        <fullName evidence="1">ATP synthase F1 sector subunit beta</fullName>
    </alternativeName>
    <alternativeName>
        <fullName evidence="1">F-ATPase subunit beta</fullName>
    </alternativeName>
</protein>